<gene>
    <name evidence="1" type="primary">tmk</name>
    <name type="ordered locus">PLES_21011</name>
</gene>
<feature type="chain" id="PRO_1000190767" description="Thymidylate kinase">
    <location>
        <begin position="1"/>
        <end position="210"/>
    </location>
</feature>
<feature type="binding site" evidence="1">
    <location>
        <begin position="10"/>
        <end position="17"/>
    </location>
    <ligand>
        <name>ATP</name>
        <dbReference type="ChEBI" id="CHEBI:30616"/>
    </ligand>
</feature>
<keyword id="KW-0067">ATP-binding</keyword>
<keyword id="KW-0418">Kinase</keyword>
<keyword id="KW-0545">Nucleotide biosynthesis</keyword>
<keyword id="KW-0547">Nucleotide-binding</keyword>
<keyword id="KW-0808">Transferase</keyword>
<comment type="function">
    <text evidence="1">Phosphorylation of dTMP to form dTDP in both de novo and salvage pathways of dTTP synthesis.</text>
</comment>
<comment type="catalytic activity">
    <reaction evidence="1">
        <text>dTMP + ATP = dTDP + ADP</text>
        <dbReference type="Rhea" id="RHEA:13517"/>
        <dbReference type="ChEBI" id="CHEBI:30616"/>
        <dbReference type="ChEBI" id="CHEBI:58369"/>
        <dbReference type="ChEBI" id="CHEBI:63528"/>
        <dbReference type="ChEBI" id="CHEBI:456216"/>
        <dbReference type="EC" id="2.7.4.9"/>
    </reaction>
</comment>
<comment type="similarity">
    <text evidence="1">Belongs to the thymidylate kinase family.</text>
</comment>
<organism>
    <name type="scientific">Pseudomonas aeruginosa (strain LESB58)</name>
    <dbReference type="NCBI Taxonomy" id="557722"/>
    <lineage>
        <taxon>Bacteria</taxon>
        <taxon>Pseudomonadati</taxon>
        <taxon>Pseudomonadota</taxon>
        <taxon>Gammaproteobacteria</taxon>
        <taxon>Pseudomonadales</taxon>
        <taxon>Pseudomonadaceae</taxon>
        <taxon>Pseudomonas</taxon>
    </lineage>
</organism>
<sequence length="210" mass="23109">MTGLFVTLEGPEGAGKSTNRDYLAERLRERGIEVQLTREPGGTPLAERIRELLLAPSDEPMAADTELLLMFAARAQHLAGVIRPALARGAVVLCDRFTDATYAYQGGGRGLPEARIAALESFVQGDLRPDLTLVFDLPVEIGLARAAARGRLDRFEQEDRRFFEAVRQTYLQRAAQAPERYQVLDAGLPLAEVQAGLDRLLPNLLERLNG</sequence>
<dbReference type="EC" id="2.7.4.9" evidence="1"/>
<dbReference type="EMBL" id="FM209186">
    <property type="protein sequence ID" value="CAW26828.1"/>
    <property type="molecule type" value="Genomic_DNA"/>
</dbReference>
<dbReference type="RefSeq" id="WP_003091125.1">
    <property type="nucleotide sequence ID" value="NC_011770.1"/>
</dbReference>
<dbReference type="SMR" id="B7V167"/>
<dbReference type="KEGG" id="pag:PLES_21011"/>
<dbReference type="HOGENOM" id="CLU_049131_0_2_6"/>
<dbReference type="GO" id="GO:0005829">
    <property type="term" value="C:cytosol"/>
    <property type="evidence" value="ECO:0007669"/>
    <property type="project" value="TreeGrafter"/>
</dbReference>
<dbReference type="GO" id="GO:0005524">
    <property type="term" value="F:ATP binding"/>
    <property type="evidence" value="ECO:0007669"/>
    <property type="project" value="UniProtKB-UniRule"/>
</dbReference>
<dbReference type="GO" id="GO:0004798">
    <property type="term" value="F:dTMP kinase activity"/>
    <property type="evidence" value="ECO:0007669"/>
    <property type="project" value="UniProtKB-UniRule"/>
</dbReference>
<dbReference type="GO" id="GO:0006233">
    <property type="term" value="P:dTDP biosynthetic process"/>
    <property type="evidence" value="ECO:0007669"/>
    <property type="project" value="InterPro"/>
</dbReference>
<dbReference type="GO" id="GO:0006235">
    <property type="term" value="P:dTTP biosynthetic process"/>
    <property type="evidence" value="ECO:0007669"/>
    <property type="project" value="UniProtKB-UniRule"/>
</dbReference>
<dbReference type="GO" id="GO:0006227">
    <property type="term" value="P:dUDP biosynthetic process"/>
    <property type="evidence" value="ECO:0007669"/>
    <property type="project" value="TreeGrafter"/>
</dbReference>
<dbReference type="CDD" id="cd01672">
    <property type="entry name" value="TMPK"/>
    <property type="match status" value="1"/>
</dbReference>
<dbReference type="FunFam" id="3.40.50.300:FF:000321">
    <property type="entry name" value="Thymidylate kinase"/>
    <property type="match status" value="1"/>
</dbReference>
<dbReference type="Gene3D" id="3.40.50.300">
    <property type="entry name" value="P-loop containing nucleotide triphosphate hydrolases"/>
    <property type="match status" value="1"/>
</dbReference>
<dbReference type="HAMAP" id="MF_00165">
    <property type="entry name" value="Thymidylate_kinase"/>
    <property type="match status" value="1"/>
</dbReference>
<dbReference type="InterPro" id="IPR027417">
    <property type="entry name" value="P-loop_NTPase"/>
</dbReference>
<dbReference type="InterPro" id="IPR039430">
    <property type="entry name" value="Thymidylate_kin-like_dom"/>
</dbReference>
<dbReference type="InterPro" id="IPR018094">
    <property type="entry name" value="Thymidylate_kinase"/>
</dbReference>
<dbReference type="NCBIfam" id="TIGR00041">
    <property type="entry name" value="DTMP_kinase"/>
    <property type="match status" value="1"/>
</dbReference>
<dbReference type="PANTHER" id="PTHR10344">
    <property type="entry name" value="THYMIDYLATE KINASE"/>
    <property type="match status" value="1"/>
</dbReference>
<dbReference type="PANTHER" id="PTHR10344:SF4">
    <property type="entry name" value="UMP-CMP KINASE 2, MITOCHONDRIAL"/>
    <property type="match status" value="1"/>
</dbReference>
<dbReference type="Pfam" id="PF02223">
    <property type="entry name" value="Thymidylate_kin"/>
    <property type="match status" value="1"/>
</dbReference>
<dbReference type="SUPFAM" id="SSF52540">
    <property type="entry name" value="P-loop containing nucleoside triphosphate hydrolases"/>
    <property type="match status" value="1"/>
</dbReference>
<accession>B7V167</accession>
<protein>
    <recommendedName>
        <fullName evidence="1">Thymidylate kinase</fullName>
        <ecNumber evidence="1">2.7.4.9</ecNumber>
    </recommendedName>
    <alternativeName>
        <fullName evidence="1">dTMP kinase</fullName>
    </alternativeName>
</protein>
<reference key="1">
    <citation type="journal article" date="2009" name="Genome Res.">
        <title>Newly introduced genomic prophage islands are critical determinants of in vivo competitiveness in the Liverpool epidemic strain of Pseudomonas aeruginosa.</title>
        <authorList>
            <person name="Winstanley C."/>
            <person name="Langille M.G.I."/>
            <person name="Fothergill J.L."/>
            <person name="Kukavica-Ibrulj I."/>
            <person name="Paradis-Bleau C."/>
            <person name="Sanschagrin F."/>
            <person name="Thomson N.R."/>
            <person name="Winsor G.L."/>
            <person name="Quail M.A."/>
            <person name="Lennard N."/>
            <person name="Bignell A."/>
            <person name="Clarke L."/>
            <person name="Seeger K."/>
            <person name="Saunders D."/>
            <person name="Harris D."/>
            <person name="Parkhill J."/>
            <person name="Hancock R.E.W."/>
            <person name="Brinkman F.S.L."/>
            <person name="Levesque R.C."/>
        </authorList>
    </citation>
    <scope>NUCLEOTIDE SEQUENCE [LARGE SCALE GENOMIC DNA]</scope>
    <source>
        <strain>LESB58</strain>
    </source>
</reference>
<evidence type="ECO:0000255" key="1">
    <source>
        <dbReference type="HAMAP-Rule" id="MF_00165"/>
    </source>
</evidence>
<proteinExistence type="inferred from homology"/>
<name>KTHY_PSEA8</name>